<organism>
    <name type="scientific">Mycoplasma genitalium (strain ATCC 33530 / DSM 19775 / NCTC 10195 / G37)</name>
    <name type="common">Mycoplasmoides genitalium</name>
    <dbReference type="NCBI Taxonomy" id="243273"/>
    <lineage>
        <taxon>Bacteria</taxon>
        <taxon>Bacillati</taxon>
        <taxon>Mycoplasmatota</taxon>
        <taxon>Mycoplasmoidales</taxon>
        <taxon>Mycoplasmoidaceae</taxon>
        <taxon>Mycoplasmoides</taxon>
    </lineage>
</organism>
<comment type="subcellular location">
    <subcellularLocation>
        <location evidence="2">Cell membrane</location>
        <topology evidence="2">Multi-pass membrane protein</topology>
    </subcellularLocation>
</comment>
<gene>
    <name type="ordered locus">MG243</name>
</gene>
<dbReference type="EMBL" id="L43967">
    <property type="status" value="NOT_ANNOTATED_CDS"/>
    <property type="molecule type" value="Genomic_DNA"/>
</dbReference>
<dbReference type="PIR" id="H64226">
    <property type="entry name" value="H64226"/>
</dbReference>
<dbReference type="RefSeq" id="WP_014894004.1">
    <property type="nucleotide sequence ID" value="NC_000908.2"/>
</dbReference>
<dbReference type="SMR" id="P47485"/>
<dbReference type="GeneID" id="88282389"/>
<dbReference type="InParanoid" id="P47485"/>
<dbReference type="OrthoDB" id="392036at2"/>
<dbReference type="BioCyc" id="MGEN243273:G1GJ2-290-MONOMER"/>
<dbReference type="Proteomes" id="UP000000807">
    <property type="component" value="Chromosome"/>
</dbReference>
<dbReference type="GO" id="GO:0005886">
    <property type="term" value="C:plasma membrane"/>
    <property type="evidence" value="ECO:0007669"/>
    <property type="project" value="UniProtKB-SubCell"/>
</dbReference>
<dbReference type="InterPro" id="IPR010432">
    <property type="entry name" value="RDD"/>
</dbReference>
<dbReference type="Pfam" id="PF06271">
    <property type="entry name" value="RDD"/>
    <property type="match status" value="1"/>
</dbReference>
<accession>P47485</accession>
<protein>
    <recommendedName>
        <fullName>Uncharacterized protein MG243</fullName>
    </recommendedName>
</protein>
<sequence>MQIKVINETNKTVQIFQCAKVKHRALAWLCDVFLLAIVLVVIFLITQAFSDNRFLLFLVLSCSQTILWTVYFIFLPFFWDGKTLFRNLLKIKLFAFDKRFLRIMIHELFLWILLSVLFLVIASYFFINQNSSEALNFFTNLDKPNAIAITIRTITILISFLQLIFIGYFCFSSEKQALQEILSNTFMVQEKHTLKSKPTSLKTNNQPDPANLPGVIALDEVEKLIN</sequence>
<evidence type="ECO:0000255" key="1"/>
<evidence type="ECO:0000305" key="2"/>
<keyword id="KW-1003">Cell membrane</keyword>
<keyword id="KW-0472">Membrane</keyword>
<keyword id="KW-1185">Reference proteome</keyword>
<keyword id="KW-0812">Transmembrane</keyword>
<keyword id="KW-1133">Transmembrane helix</keyword>
<reference key="1">
    <citation type="journal article" date="1995" name="Science">
        <title>The minimal gene complement of Mycoplasma genitalium.</title>
        <authorList>
            <person name="Fraser C.M."/>
            <person name="Gocayne J.D."/>
            <person name="White O."/>
            <person name="Adams M.D."/>
            <person name="Clayton R.A."/>
            <person name="Fleischmann R.D."/>
            <person name="Bult C.J."/>
            <person name="Kerlavage A.R."/>
            <person name="Sutton G.G."/>
            <person name="Kelley J.M."/>
            <person name="Fritchman J.L."/>
            <person name="Weidman J.F."/>
            <person name="Small K.V."/>
            <person name="Sandusky M."/>
            <person name="Fuhrmann J.L."/>
            <person name="Nguyen D.T."/>
            <person name="Utterback T.R."/>
            <person name="Saudek D.M."/>
            <person name="Phillips C.A."/>
            <person name="Merrick J.M."/>
            <person name="Tomb J.-F."/>
            <person name="Dougherty B.A."/>
            <person name="Bott K.F."/>
            <person name="Hu P.-C."/>
            <person name="Lucier T.S."/>
            <person name="Peterson S.N."/>
            <person name="Smith H.O."/>
            <person name="Hutchison C.A. III"/>
            <person name="Venter J.C."/>
        </authorList>
    </citation>
    <scope>NUCLEOTIDE SEQUENCE [LARGE SCALE GENOMIC DNA]</scope>
    <source>
        <strain>ATCC 33530 / DSM 19775 / NCTC 10195 / G37</strain>
    </source>
</reference>
<reference key="2">
    <citation type="submission" date="2005-09" db="EMBL/GenBank/DDBJ databases">
        <authorList>
            <person name="Fraser C.M."/>
            <person name="Gocayne J.D."/>
            <person name="White O."/>
            <person name="Adams M.D."/>
            <person name="Clayton R.A."/>
            <person name="Fleischmann R.D."/>
            <person name="Bult C.J."/>
            <person name="Kerlavage A.R."/>
            <person name="Sutton G.G."/>
            <person name="Kelley J.M."/>
            <person name="Fritchman J.L."/>
            <person name="Weidman J.F."/>
            <person name="Small K.V."/>
            <person name="Sandusky M."/>
            <person name="Fuhrmann J.L."/>
            <person name="Nguyen D.T."/>
            <person name="Utterback T.R."/>
            <person name="Saudek D.M."/>
            <person name="Phillips C.A."/>
            <person name="Merrick J.M."/>
            <person name="Tomb J.-F."/>
            <person name="Dougherty B.A."/>
            <person name="Bott K.F."/>
            <person name="Hu P.-C."/>
            <person name="Lucier T.S."/>
            <person name="Peterson S.N."/>
            <person name="Smith H.O."/>
            <person name="Hutchison C.A. III"/>
            <person name="Venter J.C."/>
        </authorList>
    </citation>
    <scope>SEQUENCE REVISION</scope>
</reference>
<name>Y243_MYCGE</name>
<feature type="chain" id="PRO_0000210483" description="Uncharacterized protein MG243">
    <location>
        <begin position="1"/>
        <end position="226"/>
    </location>
</feature>
<feature type="transmembrane region" description="Helical" evidence="1">
    <location>
        <begin position="25"/>
        <end position="45"/>
    </location>
</feature>
<feature type="transmembrane region" description="Helical" evidence="1">
    <location>
        <begin position="54"/>
        <end position="74"/>
    </location>
</feature>
<feature type="transmembrane region" description="Helical" evidence="1">
    <location>
        <begin position="107"/>
        <end position="127"/>
    </location>
</feature>
<feature type="transmembrane region" description="Helical" evidence="1">
    <location>
        <begin position="153"/>
        <end position="173"/>
    </location>
</feature>
<proteinExistence type="predicted"/>